<evidence type="ECO:0000255" key="1"/>
<evidence type="ECO:0000255" key="2">
    <source>
        <dbReference type="PROSITE-ProRule" id="PRU00703"/>
    </source>
</evidence>
<evidence type="ECO:0000255" key="3">
    <source>
        <dbReference type="PROSITE-ProRule" id="PRU01193"/>
    </source>
</evidence>
<evidence type="ECO:0000256" key="4">
    <source>
        <dbReference type="SAM" id="MobiDB-lite"/>
    </source>
</evidence>
<evidence type="ECO:0000305" key="5"/>
<organism>
    <name type="scientific">Arabidopsis thaliana</name>
    <name type="common">Mouse-ear cress</name>
    <dbReference type="NCBI Taxonomy" id="3702"/>
    <lineage>
        <taxon>Eukaryota</taxon>
        <taxon>Viridiplantae</taxon>
        <taxon>Streptophyta</taxon>
        <taxon>Embryophyta</taxon>
        <taxon>Tracheophyta</taxon>
        <taxon>Spermatophyta</taxon>
        <taxon>Magnoliopsida</taxon>
        <taxon>eudicotyledons</taxon>
        <taxon>Gunneridae</taxon>
        <taxon>Pentapetalae</taxon>
        <taxon>rosids</taxon>
        <taxon>malvids</taxon>
        <taxon>Brassicales</taxon>
        <taxon>Brassicaceae</taxon>
        <taxon>Camelineae</taxon>
        <taxon>Arabidopsis</taxon>
    </lineage>
</organism>
<keyword id="KW-0129">CBS domain</keyword>
<keyword id="KW-0150">Chloroplast</keyword>
<keyword id="KW-0472">Membrane</keyword>
<keyword id="KW-0934">Plastid</keyword>
<keyword id="KW-1185">Reference proteome</keyword>
<keyword id="KW-0677">Repeat</keyword>
<keyword id="KW-0809">Transit peptide</keyword>
<keyword id="KW-0812">Transmembrane</keyword>
<keyword id="KW-1133">Transmembrane helix</keyword>
<keyword id="KW-0813">Transport</keyword>
<accession>Q9LK65</accession>
<dbReference type="EMBL" id="AP000375">
    <property type="protein sequence ID" value="BAB01398.1"/>
    <property type="molecule type" value="Genomic_DNA"/>
</dbReference>
<dbReference type="EMBL" id="CP002686">
    <property type="protein sequence ID" value="AEE75290.1"/>
    <property type="molecule type" value="Genomic_DNA"/>
</dbReference>
<dbReference type="RefSeq" id="NP_187914.1">
    <property type="nucleotide sequence ID" value="NM_112146.3"/>
</dbReference>
<dbReference type="SMR" id="Q9LK65"/>
<dbReference type="FunCoup" id="Q9LK65">
    <property type="interactions" value="175"/>
</dbReference>
<dbReference type="STRING" id="3702.Q9LK65"/>
<dbReference type="iPTMnet" id="Q9LK65"/>
<dbReference type="MetOSite" id="Q9LK65"/>
<dbReference type="PaxDb" id="3702-AT3G13070.1"/>
<dbReference type="ProteomicsDB" id="232372"/>
<dbReference type="EnsemblPlants" id="AT3G13070.1">
    <property type="protein sequence ID" value="AT3G13070.1"/>
    <property type="gene ID" value="AT3G13070"/>
</dbReference>
<dbReference type="GeneID" id="820495"/>
<dbReference type="Gramene" id="AT3G13070.1">
    <property type="protein sequence ID" value="AT3G13070.1"/>
    <property type="gene ID" value="AT3G13070"/>
</dbReference>
<dbReference type="KEGG" id="ath:AT3G13070"/>
<dbReference type="Araport" id="AT3G13070"/>
<dbReference type="TAIR" id="AT3G13070"/>
<dbReference type="eggNOG" id="KOG2118">
    <property type="taxonomic scope" value="Eukaryota"/>
</dbReference>
<dbReference type="HOGENOM" id="CLU_015237_4_4_1"/>
<dbReference type="InParanoid" id="Q9LK65"/>
<dbReference type="OMA" id="GHEVFGQ"/>
<dbReference type="PhylomeDB" id="Q9LK65"/>
<dbReference type="PRO" id="PR:Q9LK65"/>
<dbReference type="Proteomes" id="UP000006548">
    <property type="component" value="Chromosome 3"/>
</dbReference>
<dbReference type="ExpressionAtlas" id="Q9LK65">
    <property type="expression patterns" value="baseline and differential"/>
</dbReference>
<dbReference type="GO" id="GO:0009941">
    <property type="term" value="C:chloroplast envelope"/>
    <property type="evidence" value="ECO:0007005"/>
    <property type="project" value="TAIR"/>
</dbReference>
<dbReference type="GO" id="GO:0031969">
    <property type="term" value="C:chloroplast membrane"/>
    <property type="evidence" value="ECO:0007669"/>
    <property type="project" value="UniProtKB-SubCell"/>
</dbReference>
<dbReference type="GO" id="GO:0005829">
    <property type="term" value="C:cytosol"/>
    <property type="evidence" value="ECO:0007005"/>
    <property type="project" value="TAIR"/>
</dbReference>
<dbReference type="GO" id="GO:0050660">
    <property type="term" value="F:flavin adenine dinucleotide binding"/>
    <property type="evidence" value="ECO:0007669"/>
    <property type="project" value="InterPro"/>
</dbReference>
<dbReference type="CDD" id="cd04590">
    <property type="entry name" value="CBS_pair_CorC_HlyC_assoc"/>
    <property type="match status" value="1"/>
</dbReference>
<dbReference type="FunFam" id="3.30.465.10:FF:000044">
    <property type="entry name" value="DUF21 domain-containing protein At1g55930, chloroplastic"/>
    <property type="match status" value="1"/>
</dbReference>
<dbReference type="FunFam" id="3.10.580.10:FF:000002">
    <property type="entry name" value="Magnesium/cobalt efflux protein CorC"/>
    <property type="match status" value="1"/>
</dbReference>
<dbReference type="Gene3D" id="3.30.465.10">
    <property type="match status" value="1"/>
</dbReference>
<dbReference type="Gene3D" id="3.10.580.10">
    <property type="entry name" value="CBS-domain"/>
    <property type="match status" value="1"/>
</dbReference>
<dbReference type="InterPro" id="IPR000644">
    <property type="entry name" value="CBS_dom"/>
</dbReference>
<dbReference type="InterPro" id="IPR046342">
    <property type="entry name" value="CBS_dom_sf"/>
</dbReference>
<dbReference type="InterPro" id="IPR002550">
    <property type="entry name" value="CNNM"/>
</dbReference>
<dbReference type="InterPro" id="IPR036318">
    <property type="entry name" value="FAD-bd_PCMH-like_sf"/>
</dbReference>
<dbReference type="InterPro" id="IPR016169">
    <property type="entry name" value="FAD-bd_PCMH_sub2"/>
</dbReference>
<dbReference type="InterPro" id="IPR044751">
    <property type="entry name" value="Ion_transp-like_CBS"/>
</dbReference>
<dbReference type="InterPro" id="IPR005170">
    <property type="entry name" value="Transptr-assoc_dom"/>
</dbReference>
<dbReference type="PANTHER" id="PTHR22777:SF28">
    <property type="entry name" value="CBS DOMAIN-CONTAINING PROTEIN"/>
    <property type="match status" value="1"/>
</dbReference>
<dbReference type="PANTHER" id="PTHR22777">
    <property type="entry name" value="HEMOLYSIN-RELATED"/>
    <property type="match status" value="1"/>
</dbReference>
<dbReference type="Pfam" id="PF00571">
    <property type="entry name" value="CBS"/>
    <property type="match status" value="2"/>
</dbReference>
<dbReference type="Pfam" id="PF01595">
    <property type="entry name" value="CNNM"/>
    <property type="match status" value="1"/>
</dbReference>
<dbReference type="Pfam" id="PF03471">
    <property type="entry name" value="CorC_HlyC"/>
    <property type="match status" value="1"/>
</dbReference>
<dbReference type="SMART" id="SM00116">
    <property type="entry name" value="CBS"/>
    <property type="match status" value="2"/>
</dbReference>
<dbReference type="SMART" id="SM01091">
    <property type="entry name" value="CorC_HlyC"/>
    <property type="match status" value="1"/>
</dbReference>
<dbReference type="SUPFAM" id="SSF54631">
    <property type="entry name" value="CBS-domain pair"/>
    <property type="match status" value="1"/>
</dbReference>
<dbReference type="SUPFAM" id="SSF56176">
    <property type="entry name" value="FAD-binding/transporter-associated domain-like"/>
    <property type="match status" value="1"/>
</dbReference>
<dbReference type="PROSITE" id="PS51371">
    <property type="entry name" value="CBS"/>
    <property type="match status" value="2"/>
</dbReference>
<dbReference type="PROSITE" id="PS51846">
    <property type="entry name" value="CNNM"/>
    <property type="match status" value="1"/>
</dbReference>
<proteinExistence type="predicted"/>
<protein>
    <recommendedName>
        <fullName>Putative DUF21 domain-containing protein At3g13070, chloroplastic</fullName>
    </recommendedName>
    <alternativeName>
        <fullName>CBS domain-containing protein CBSDUFCH1</fullName>
    </alternativeName>
</protein>
<name>Y3307_ARATH</name>
<comment type="subcellular location">
    <subcellularLocation>
        <location evidence="5">Plastid</location>
        <location evidence="5">Chloroplast membrane</location>
        <topology evidence="5">Multi-pass membrane protein</topology>
    </subcellularLocation>
</comment>
<sequence>MMGMALELSVLGRSVIDSKTLNLKRYGQKSKLSGRFLPRAELHCPVALSSSKHSNLSFRFRRSCEFSYRSRFMLFSSSQCHEGSQRKSDSGEKELESIKVLLKRGIVIGALVCGVFLYGCQKVLASAGVVEAGYEVFGQSVVLFKNALPKIYQVLTVLREQGLILAALLSLSAFFSMAETSITTLWPWKVRELAEKEPENGVFRMLRSDVTRFLTTILIGTTVVNIAATALVTEAATAIFGEAGVSAATGLMTVAILLLTEITPKSVAVHNAQEVARIVVRPVAWLSLVLYPVGRIVTYLSMGILKILGLKGRSEPYVTEDELKLMLRGAELSGAIEEEEQDMIENVLEIKDTHVREVMTPLVDVVAIDASASLVDFHSMWVTHQYSRVPVFEQRIDNIVGIAYAMDLLDYVQKGDLLESTSVGDMAHKPAYFVPDSMSVWNLLREFRIRKVHMAVVLNEYGGTIGIVTLEDVVEEIVGEIFDENDSKEEIQKKTGYIVMRDEGIYDVDANTSIDQLSEELNMKMPEGIQYETVSGFVCEAFGYIPKTGESVKVVLEKESWEEDGEEEEGKQERQEPKEKNQIYRVEILAGNARKVSAVRFERVNDMDQVSEASDVKSMVPKFVRKWSSEEDDGNLSNEEDQSENAVLDEHVLADNSKKQQ</sequence>
<gene>
    <name type="primary">CBSDUFCH1</name>
    <name type="ordered locus">At3g13070</name>
    <name type="ORF">MJG19.2</name>
</gene>
<reference key="1">
    <citation type="journal article" date="2000" name="DNA Res.">
        <title>Structural analysis of Arabidopsis thaliana chromosome 3. II. Sequence features of the 4,251,695 bp regions covered by 90 P1, TAC and BAC clones.</title>
        <authorList>
            <person name="Kaneko T."/>
            <person name="Katoh T."/>
            <person name="Sato S."/>
            <person name="Nakamura Y."/>
            <person name="Asamizu E."/>
            <person name="Tabata S."/>
        </authorList>
    </citation>
    <scope>NUCLEOTIDE SEQUENCE [LARGE SCALE GENOMIC DNA]</scope>
    <source>
        <strain>cv. Columbia</strain>
    </source>
</reference>
<reference key="2">
    <citation type="journal article" date="2017" name="Plant J.">
        <title>Araport11: a complete reannotation of the Arabidopsis thaliana reference genome.</title>
        <authorList>
            <person name="Cheng C.Y."/>
            <person name="Krishnakumar V."/>
            <person name="Chan A.P."/>
            <person name="Thibaud-Nissen F."/>
            <person name="Schobel S."/>
            <person name="Town C.D."/>
        </authorList>
    </citation>
    <scope>GENOME REANNOTATION</scope>
    <source>
        <strain>cv. Columbia</strain>
    </source>
</reference>
<reference key="3">
    <citation type="journal article" date="2009" name="BMC Genomics">
        <title>Genome wide expression analysis of CBS domain containing proteins in Arabidopsis thaliana (L.) Heynh and Oryza sativa L. reveals their developmental and stress regulation.</title>
        <authorList>
            <person name="Kushwaha H.R."/>
            <person name="Singh A.K."/>
            <person name="Sopory S.K."/>
            <person name="Singla-Pareek S.L."/>
            <person name="Pareek A."/>
        </authorList>
    </citation>
    <scope>GENE FAMILY</scope>
    <scope>NOMENCLATURE</scope>
</reference>
<feature type="transit peptide" description="Chloroplast" evidence="1">
    <location>
        <begin position="1"/>
        <end position="71"/>
    </location>
</feature>
<feature type="chain" id="PRO_0000411685" description="Putative DUF21 domain-containing protein At3g13070, chloroplastic">
    <location>
        <begin position="72"/>
        <end position="661"/>
    </location>
</feature>
<feature type="transmembrane region" description="Helical" evidence="1">
    <location>
        <begin position="105"/>
        <end position="125"/>
    </location>
</feature>
<feature type="transmembrane region" description="Helical" evidence="1">
    <location>
        <begin position="162"/>
        <end position="182"/>
    </location>
</feature>
<feature type="transmembrane region" description="Helical" evidence="1">
    <location>
        <begin position="213"/>
        <end position="233"/>
    </location>
</feature>
<feature type="transmembrane region" description="Helical" evidence="1">
    <location>
        <begin position="239"/>
        <end position="259"/>
    </location>
</feature>
<feature type="transmembrane region" description="Helical" evidence="1">
    <location>
        <begin position="285"/>
        <end position="305"/>
    </location>
</feature>
<feature type="domain" description="CNNM transmembrane" evidence="3">
    <location>
        <begin position="154"/>
        <end position="340"/>
    </location>
</feature>
<feature type="domain" description="CBS 1" evidence="2">
    <location>
        <begin position="359"/>
        <end position="420"/>
    </location>
</feature>
<feature type="domain" description="CBS 2" evidence="2">
    <location>
        <begin position="426"/>
        <end position="484"/>
    </location>
</feature>
<feature type="region of interest" description="Disordered" evidence="4">
    <location>
        <begin position="559"/>
        <end position="578"/>
    </location>
</feature>
<feature type="region of interest" description="Disordered" evidence="4">
    <location>
        <begin position="628"/>
        <end position="661"/>
    </location>
</feature>
<feature type="compositionally biased region" description="Acidic residues" evidence="4">
    <location>
        <begin position="560"/>
        <end position="570"/>
    </location>
</feature>
<feature type="compositionally biased region" description="Acidic residues" evidence="4">
    <location>
        <begin position="630"/>
        <end position="643"/>
    </location>
</feature>
<feature type="compositionally biased region" description="Basic and acidic residues" evidence="4">
    <location>
        <begin position="648"/>
        <end position="661"/>
    </location>
</feature>